<organism>
    <name type="scientific">Shigella boydii serotype 18 (strain CDC 3083-94 / BS512)</name>
    <dbReference type="NCBI Taxonomy" id="344609"/>
    <lineage>
        <taxon>Bacteria</taxon>
        <taxon>Pseudomonadati</taxon>
        <taxon>Pseudomonadota</taxon>
        <taxon>Gammaproteobacteria</taxon>
        <taxon>Enterobacterales</taxon>
        <taxon>Enterobacteriaceae</taxon>
        <taxon>Shigella</taxon>
    </lineage>
</organism>
<reference key="1">
    <citation type="submission" date="2008-05" db="EMBL/GenBank/DDBJ databases">
        <title>Complete sequence of Shigella boydii serotype 18 strain BS512.</title>
        <authorList>
            <person name="Rasko D.A."/>
            <person name="Rosovitz M."/>
            <person name="Maurelli A.T."/>
            <person name="Myers G."/>
            <person name="Seshadri R."/>
            <person name="Cer R."/>
            <person name="Jiang L."/>
            <person name="Ravel J."/>
            <person name="Sebastian Y."/>
        </authorList>
    </citation>
    <scope>NUCLEOTIDE SEQUENCE [LARGE SCALE GENOMIC DNA]</scope>
    <source>
        <strain>CDC 3083-94 / BS512</strain>
    </source>
</reference>
<dbReference type="EC" id="2.4.2.9" evidence="1"/>
<dbReference type="EMBL" id="CP001063">
    <property type="protein sequence ID" value="ACD06676.1"/>
    <property type="molecule type" value="Genomic_DNA"/>
</dbReference>
<dbReference type="RefSeq" id="WP_001295473.1">
    <property type="nucleotide sequence ID" value="NC_010658.1"/>
</dbReference>
<dbReference type="SMR" id="B2TXS3"/>
<dbReference type="STRING" id="344609.SbBS512_E2872"/>
<dbReference type="GeneID" id="93774638"/>
<dbReference type="KEGG" id="sbc:SbBS512_E2872"/>
<dbReference type="HOGENOM" id="CLU_067096_2_2_6"/>
<dbReference type="UniPathway" id="UPA00574">
    <property type="reaction ID" value="UER00636"/>
</dbReference>
<dbReference type="Proteomes" id="UP000001030">
    <property type="component" value="Chromosome"/>
</dbReference>
<dbReference type="GO" id="GO:0005525">
    <property type="term" value="F:GTP binding"/>
    <property type="evidence" value="ECO:0007669"/>
    <property type="project" value="UniProtKB-KW"/>
</dbReference>
<dbReference type="GO" id="GO:0000287">
    <property type="term" value="F:magnesium ion binding"/>
    <property type="evidence" value="ECO:0007669"/>
    <property type="project" value="UniProtKB-UniRule"/>
</dbReference>
<dbReference type="GO" id="GO:0004845">
    <property type="term" value="F:uracil phosphoribosyltransferase activity"/>
    <property type="evidence" value="ECO:0007669"/>
    <property type="project" value="UniProtKB-UniRule"/>
</dbReference>
<dbReference type="GO" id="GO:0044206">
    <property type="term" value="P:UMP salvage"/>
    <property type="evidence" value="ECO:0007669"/>
    <property type="project" value="UniProtKB-UniRule"/>
</dbReference>
<dbReference type="GO" id="GO:0006223">
    <property type="term" value="P:uracil salvage"/>
    <property type="evidence" value="ECO:0007669"/>
    <property type="project" value="InterPro"/>
</dbReference>
<dbReference type="CDD" id="cd06223">
    <property type="entry name" value="PRTases_typeI"/>
    <property type="match status" value="1"/>
</dbReference>
<dbReference type="FunFam" id="3.40.50.2020:FF:000003">
    <property type="entry name" value="Uracil phosphoribosyltransferase"/>
    <property type="match status" value="1"/>
</dbReference>
<dbReference type="Gene3D" id="3.40.50.2020">
    <property type="match status" value="1"/>
</dbReference>
<dbReference type="HAMAP" id="MF_01218_B">
    <property type="entry name" value="Upp_B"/>
    <property type="match status" value="1"/>
</dbReference>
<dbReference type="InterPro" id="IPR000836">
    <property type="entry name" value="PRibTrfase_dom"/>
</dbReference>
<dbReference type="InterPro" id="IPR029057">
    <property type="entry name" value="PRTase-like"/>
</dbReference>
<dbReference type="InterPro" id="IPR034332">
    <property type="entry name" value="Upp_B"/>
</dbReference>
<dbReference type="InterPro" id="IPR050054">
    <property type="entry name" value="UPRTase/APRTase"/>
</dbReference>
<dbReference type="InterPro" id="IPR005765">
    <property type="entry name" value="Ura_phspho_trans"/>
</dbReference>
<dbReference type="NCBIfam" id="NF001097">
    <property type="entry name" value="PRK00129.1"/>
    <property type="match status" value="1"/>
</dbReference>
<dbReference type="NCBIfam" id="TIGR01091">
    <property type="entry name" value="upp"/>
    <property type="match status" value="1"/>
</dbReference>
<dbReference type="PANTHER" id="PTHR32315">
    <property type="entry name" value="ADENINE PHOSPHORIBOSYLTRANSFERASE"/>
    <property type="match status" value="1"/>
</dbReference>
<dbReference type="PANTHER" id="PTHR32315:SF4">
    <property type="entry name" value="URACIL PHOSPHORIBOSYLTRANSFERASE, CHLOROPLASTIC"/>
    <property type="match status" value="1"/>
</dbReference>
<dbReference type="Pfam" id="PF14681">
    <property type="entry name" value="UPRTase"/>
    <property type="match status" value="1"/>
</dbReference>
<dbReference type="SUPFAM" id="SSF53271">
    <property type="entry name" value="PRTase-like"/>
    <property type="match status" value="1"/>
</dbReference>
<keyword id="KW-0021">Allosteric enzyme</keyword>
<keyword id="KW-0328">Glycosyltransferase</keyword>
<keyword id="KW-0342">GTP-binding</keyword>
<keyword id="KW-0460">Magnesium</keyword>
<keyword id="KW-0547">Nucleotide-binding</keyword>
<keyword id="KW-1185">Reference proteome</keyword>
<keyword id="KW-0808">Transferase</keyword>
<comment type="function">
    <text evidence="1">Catalyzes the conversion of uracil and 5-phospho-alpha-D-ribose 1-diphosphate (PRPP) to UMP and diphosphate.</text>
</comment>
<comment type="catalytic activity">
    <reaction evidence="1">
        <text>UMP + diphosphate = 5-phospho-alpha-D-ribose 1-diphosphate + uracil</text>
        <dbReference type="Rhea" id="RHEA:13017"/>
        <dbReference type="ChEBI" id="CHEBI:17568"/>
        <dbReference type="ChEBI" id="CHEBI:33019"/>
        <dbReference type="ChEBI" id="CHEBI:57865"/>
        <dbReference type="ChEBI" id="CHEBI:58017"/>
        <dbReference type="EC" id="2.4.2.9"/>
    </reaction>
</comment>
<comment type="cofactor">
    <cofactor evidence="1">
        <name>Mg(2+)</name>
        <dbReference type="ChEBI" id="CHEBI:18420"/>
    </cofactor>
    <text evidence="1">Binds 1 Mg(2+) ion per subunit. The magnesium is bound as Mg-PRPP.</text>
</comment>
<comment type="activity regulation">
    <text evidence="1">Allosterically activated by GTP.</text>
</comment>
<comment type="pathway">
    <text evidence="1">Pyrimidine metabolism; UMP biosynthesis via salvage pathway; UMP from uracil: step 1/1.</text>
</comment>
<comment type="similarity">
    <text evidence="1">Belongs to the UPRTase family.</text>
</comment>
<protein>
    <recommendedName>
        <fullName evidence="1">Uracil phosphoribosyltransferase</fullName>
        <ecNumber evidence="1">2.4.2.9</ecNumber>
    </recommendedName>
    <alternativeName>
        <fullName evidence="1">UMP pyrophosphorylase</fullName>
    </alternativeName>
    <alternativeName>
        <fullName evidence="1">UPRTase</fullName>
    </alternativeName>
</protein>
<sequence>MKIVEVKHPLVKHKLGLMREQDISTKRFRELASEVGSLLTYEATADLETEKVTIEGWNGPVEIDQIKGKKITVVPILRAGLGMMDGVLENVPSARISVVGMYRNEETLEPVPYFQKLVSNIDERMALIVDPMLATGGSVIATIDLLKKAGCSSIKVLVLVAAPEGIAALEKAHPDVELYTASIDQGLNEHGYIIPGLGDAGDKIFGTK</sequence>
<evidence type="ECO:0000255" key="1">
    <source>
        <dbReference type="HAMAP-Rule" id="MF_01218"/>
    </source>
</evidence>
<name>UPP_SHIB3</name>
<feature type="chain" id="PRO_1000139164" description="Uracil phosphoribosyltransferase">
    <location>
        <begin position="1"/>
        <end position="208"/>
    </location>
</feature>
<feature type="binding site" evidence="1">
    <location>
        <position position="78"/>
    </location>
    <ligand>
        <name>5-phospho-alpha-D-ribose 1-diphosphate</name>
        <dbReference type="ChEBI" id="CHEBI:58017"/>
    </ligand>
</feature>
<feature type="binding site" evidence="1">
    <location>
        <position position="103"/>
    </location>
    <ligand>
        <name>5-phospho-alpha-D-ribose 1-diphosphate</name>
        <dbReference type="ChEBI" id="CHEBI:58017"/>
    </ligand>
</feature>
<feature type="binding site" evidence="1">
    <location>
        <begin position="130"/>
        <end position="138"/>
    </location>
    <ligand>
        <name>5-phospho-alpha-D-ribose 1-diphosphate</name>
        <dbReference type="ChEBI" id="CHEBI:58017"/>
    </ligand>
</feature>
<feature type="binding site" evidence="1">
    <location>
        <position position="193"/>
    </location>
    <ligand>
        <name>uracil</name>
        <dbReference type="ChEBI" id="CHEBI:17568"/>
    </ligand>
</feature>
<feature type="binding site" evidence="1">
    <location>
        <begin position="198"/>
        <end position="200"/>
    </location>
    <ligand>
        <name>uracil</name>
        <dbReference type="ChEBI" id="CHEBI:17568"/>
    </ligand>
</feature>
<feature type="binding site" evidence="1">
    <location>
        <position position="199"/>
    </location>
    <ligand>
        <name>5-phospho-alpha-D-ribose 1-diphosphate</name>
        <dbReference type="ChEBI" id="CHEBI:58017"/>
    </ligand>
</feature>
<accession>B2TXS3</accession>
<gene>
    <name evidence="1" type="primary">upp</name>
    <name type="ordered locus">SbBS512_E2872</name>
</gene>
<proteinExistence type="inferred from homology"/>